<proteinExistence type="evidence at protein level"/>
<feature type="chain" id="PRO_0000360610" description="UPF0714 protein YndL">
    <location>
        <begin position="1"/>
        <end position="252"/>
    </location>
</feature>
<feature type="transmembrane region" description="Helical" evidence="1">
    <location>
        <begin position="33"/>
        <end position="51"/>
    </location>
</feature>
<feature type="helix" evidence="4">
    <location>
        <begin position="58"/>
        <end position="64"/>
    </location>
</feature>
<feature type="helix" evidence="4">
    <location>
        <begin position="67"/>
        <end position="69"/>
    </location>
</feature>
<feature type="strand" evidence="4">
    <location>
        <begin position="70"/>
        <end position="75"/>
    </location>
</feature>
<feature type="strand" evidence="4">
    <location>
        <begin position="80"/>
        <end position="89"/>
    </location>
</feature>
<feature type="helix" evidence="4">
    <location>
        <begin position="95"/>
        <end position="102"/>
    </location>
</feature>
<feature type="turn" evidence="4">
    <location>
        <begin position="103"/>
        <end position="105"/>
    </location>
</feature>
<feature type="strand" evidence="4">
    <location>
        <begin position="106"/>
        <end position="113"/>
    </location>
</feature>
<feature type="helix" evidence="4">
    <location>
        <begin position="119"/>
        <end position="122"/>
    </location>
</feature>
<feature type="helix" evidence="4">
    <location>
        <begin position="126"/>
        <end position="128"/>
    </location>
</feature>
<feature type="helix" evidence="4">
    <location>
        <begin position="132"/>
        <end position="139"/>
    </location>
</feature>
<feature type="strand" evidence="4">
    <location>
        <begin position="142"/>
        <end position="150"/>
    </location>
</feature>
<feature type="strand" evidence="4">
    <location>
        <begin position="157"/>
        <end position="162"/>
    </location>
</feature>
<feature type="helix" evidence="4">
    <location>
        <begin position="164"/>
        <end position="176"/>
    </location>
</feature>
<feature type="strand" evidence="4">
    <location>
        <begin position="181"/>
        <end position="183"/>
    </location>
</feature>
<feature type="helix" evidence="4">
    <location>
        <begin position="198"/>
        <end position="200"/>
    </location>
</feature>
<feature type="strand" evidence="4">
    <location>
        <begin position="202"/>
        <end position="204"/>
    </location>
</feature>
<feature type="strand" evidence="4">
    <location>
        <begin position="206"/>
        <end position="213"/>
    </location>
</feature>
<feature type="helix" evidence="4">
    <location>
        <begin position="214"/>
        <end position="218"/>
    </location>
</feature>
<feature type="strand" evidence="4">
    <location>
        <begin position="221"/>
        <end position="223"/>
    </location>
</feature>
<feature type="turn" evidence="4">
    <location>
        <begin position="226"/>
        <end position="228"/>
    </location>
</feature>
<feature type="helix" evidence="4">
    <location>
        <begin position="229"/>
        <end position="231"/>
    </location>
</feature>
<feature type="helix" evidence="4">
    <location>
        <begin position="235"/>
        <end position="251"/>
    </location>
</feature>
<gene>
    <name type="primary">yndL</name>
    <name type="ordered locus">BSU17820</name>
</gene>
<evidence type="ECO:0000255" key="1"/>
<evidence type="ECO:0000269" key="2">
    <source>
    </source>
</evidence>
<evidence type="ECO:0000305" key="3"/>
<evidence type="ECO:0007829" key="4">
    <source>
        <dbReference type="PDB" id="5ONK"/>
    </source>
</evidence>
<reference key="1">
    <citation type="journal article" date="1997" name="Nature">
        <title>The complete genome sequence of the Gram-positive bacterium Bacillus subtilis.</title>
        <authorList>
            <person name="Kunst F."/>
            <person name="Ogasawara N."/>
            <person name="Moszer I."/>
            <person name="Albertini A.M."/>
            <person name="Alloni G."/>
            <person name="Azevedo V."/>
            <person name="Bertero M.G."/>
            <person name="Bessieres P."/>
            <person name="Bolotin A."/>
            <person name="Borchert S."/>
            <person name="Borriss R."/>
            <person name="Boursier L."/>
            <person name="Brans A."/>
            <person name="Braun M."/>
            <person name="Brignell S.C."/>
            <person name="Bron S."/>
            <person name="Brouillet S."/>
            <person name="Bruschi C.V."/>
            <person name="Caldwell B."/>
            <person name="Capuano V."/>
            <person name="Carter N.M."/>
            <person name="Choi S.-K."/>
            <person name="Codani J.-J."/>
            <person name="Connerton I.F."/>
            <person name="Cummings N.J."/>
            <person name="Daniel R.A."/>
            <person name="Denizot F."/>
            <person name="Devine K.M."/>
            <person name="Duesterhoeft A."/>
            <person name="Ehrlich S.D."/>
            <person name="Emmerson P.T."/>
            <person name="Entian K.-D."/>
            <person name="Errington J."/>
            <person name="Fabret C."/>
            <person name="Ferrari E."/>
            <person name="Foulger D."/>
            <person name="Fritz C."/>
            <person name="Fujita M."/>
            <person name="Fujita Y."/>
            <person name="Fuma S."/>
            <person name="Galizzi A."/>
            <person name="Galleron N."/>
            <person name="Ghim S.-Y."/>
            <person name="Glaser P."/>
            <person name="Goffeau A."/>
            <person name="Golightly E.J."/>
            <person name="Grandi G."/>
            <person name="Guiseppi G."/>
            <person name="Guy B.J."/>
            <person name="Haga K."/>
            <person name="Haiech J."/>
            <person name="Harwood C.R."/>
            <person name="Henaut A."/>
            <person name="Hilbert H."/>
            <person name="Holsappel S."/>
            <person name="Hosono S."/>
            <person name="Hullo M.-F."/>
            <person name="Itaya M."/>
            <person name="Jones L.-M."/>
            <person name="Joris B."/>
            <person name="Karamata D."/>
            <person name="Kasahara Y."/>
            <person name="Klaerr-Blanchard M."/>
            <person name="Klein C."/>
            <person name="Kobayashi Y."/>
            <person name="Koetter P."/>
            <person name="Koningstein G."/>
            <person name="Krogh S."/>
            <person name="Kumano M."/>
            <person name="Kurita K."/>
            <person name="Lapidus A."/>
            <person name="Lardinois S."/>
            <person name="Lauber J."/>
            <person name="Lazarevic V."/>
            <person name="Lee S.-M."/>
            <person name="Levine A."/>
            <person name="Liu H."/>
            <person name="Masuda S."/>
            <person name="Mauel C."/>
            <person name="Medigue C."/>
            <person name="Medina N."/>
            <person name="Mellado R.P."/>
            <person name="Mizuno M."/>
            <person name="Moestl D."/>
            <person name="Nakai S."/>
            <person name="Noback M."/>
            <person name="Noone D."/>
            <person name="O'Reilly M."/>
            <person name="Ogawa K."/>
            <person name="Ogiwara A."/>
            <person name="Oudega B."/>
            <person name="Park S.-H."/>
            <person name="Parro V."/>
            <person name="Pohl T.M."/>
            <person name="Portetelle D."/>
            <person name="Porwollik S."/>
            <person name="Prescott A.M."/>
            <person name="Presecan E."/>
            <person name="Pujic P."/>
            <person name="Purnelle B."/>
            <person name="Rapoport G."/>
            <person name="Rey M."/>
            <person name="Reynolds S."/>
            <person name="Rieger M."/>
            <person name="Rivolta C."/>
            <person name="Rocha E."/>
            <person name="Roche B."/>
            <person name="Rose M."/>
            <person name="Sadaie Y."/>
            <person name="Sato T."/>
            <person name="Scanlan E."/>
            <person name="Schleich S."/>
            <person name="Schroeter R."/>
            <person name="Scoffone F."/>
            <person name="Sekiguchi J."/>
            <person name="Sekowska A."/>
            <person name="Seror S.J."/>
            <person name="Serror P."/>
            <person name="Shin B.-S."/>
            <person name="Soldo B."/>
            <person name="Sorokin A."/>
            <person name="Tacconi E."/>
            <person name="Takagi T."/>
            <person name="Takahashi H."/>
            <person name="Takemaru K."/>
            <person name="Takeuchi M."/>
            <person name="Tamakoshi A."/>
            <person name="Tanaka T."/>
            <person name="Terpstra P."/>
            <person name="Tognoni A."/>
            <person name="Tosato V."/>
            <person name="Uchiyama S."/>
            <person name="Vandenbol M."/>
            <person name="Vannier F."/>
            <person name="Vassarotti A."/>
            <person name="Viari A."/>
            <person name="Wambutt R."/>
            <person name="Wedler E."/>
            <person name="Wedler H."/>
            <person name="Weitzenegger T."/>
            <person name="Winters P."/>
            <person name="Wipat A."/>
            <person name="Yamamoto H."/>
            <person name="Yamane K."/>
            <person name="Yasumoto K."/>
            <person name="Yata K."/>
            <person name="Yoshida K."/>
            <person name="Yoshikawa H.-F."/>
            <person name="Zumstein E."/>
            <person name="Yoshikawa H."/>
            <person name="Danchin A."/>
        </authorList>
    </citation>
    <scope>NUCLEOTIDE SEQUENCE [LARGE SCALE GENOMIC DNA]</scope>
    <source>
        <strain>168</strain>
    </source>
</reference>
<reference key="2">
    <citation type="journal article" date="2006" name="J. Bacteriol.">
        <title>Genes for small, noncoding RNAs under sporulation control in Bacillus subtilis.</title>
        <authorList>
            <person name="Silvaggi J.M."/>
            <person name="Perkins J.B."/>
            <person name="Losick R."/>
        </authorList>
    </citation>
    <scope>DEVELOPMENTAL STAGE</scope>
</reference>
<name>YNDL_BACSU</name>
<dbReference type="EMBL" id="AL009126">
    <property type="protein sequence ID" value="CAB13666.1"/>
    <property type="molecule type" value="Genomic_DNA"/>
</dbReference>
<dbReference type="PIR" id="C69890">
    <property type="entry name" value="C69890"/>
</dbReference>
<dbReference type="PDB" id="5ONJ">
    <property type="method" value="X-ray"/>
    <property type="resolution" value="1.70 A"/>
    <property type="chains" value="A=47-252"/>
</dbReference>
<dbReference type="PDB" id="5ONK">
    <property type="method" value="X-ray"/>
    <property type="resolution" value="1.03 A"/>
    <property type="chains" value="A=47-252"/>
</dbReference>
<dbReference type="PDB" id="5ONL">
    <property type="method" value="X-ray"/>
    <property type="resolution" value="1.70 A"/>
    <property type="chains" value="A=51-252"/>
</dbReference>
<dbReference type="PDB" id="6HRI">
    <property type="method" value="X-ray"/>
    <property type="resolution" value="1.03 A"/>
    <property type="chains" value="A=51-252"/>
</dbReference>
<dbReference type="PDB" id="6HRJ">
    <property type="method" value="X-ray"/>
    <property type="resolution" value="1.70 A"/>
    <property type="chains" value="A=47-252"/>
</dbReference>
<dbReference type="PDBsum" id="5ONJ"/>
<dbReference type="PDBsum" id="5ONK"/>
<dbReference type="PDBsum" id="5ONL"/>
<dbReference type="PDBsum" id="6HRI"/>
<dbReference type="PDBsum" id="6HRJ"/>
<dbReference type="SMR" id="O31815"/>
<dbReference type="FunCoup" id="O31815">
    <property type="interactions" value="31"/>
</dbReference>
<dbReference type="STRING" id="224308.BSU17820"/>
<dbReference type="PaxDb" id="224308-BSU17820"/>
<dbReference type="DNASU" id="939553"/>
<dbReference type="EnsemblBacteria" id="CAB13666">
    <property type="protein sequence ID" value="CAB13666"/>
    <property type="gene ID" value="BSU_17820"/>
</dbReference>
<dbReference type="GeneID" id="939553"/>
<dbReference type="KEGG" id="bsu:BSU17820"/>
<dbReference type="PATRIC" id="fig|224308.179.peg.1942"/>
<dbReference type="eggNOG" id="COG4195">
    <property type="taxonomic scope" value="Bacteria"/>
</dbReference>
<dbReference type="InParanoid" id="O31815"/>
<dbReference type="OrthoDB" id="7721587at2"/>
<dbReference type="PhylomeDB" id="O31815"/>
<dbReference type="BioCyc" id="BSUB:BSU17820-MONOMER"/>
<dbReference type="Proteomes" id="UP000001570">
    <property type="component" value="Chromosome"/>
</dbReference>
<dbReference type="GO" id="GO:0005886">
    <property type="term" value="C:plasma membrane"/>
    <property type="evidence" value="ECO:0007669"/>
    <property type="project" value="UniProtKB-SubCell"/>
</dbReference>
<dbReference type="GO" id="GO:0016787">
    <property type="term" value="F:hydrolase activity"/>
    <property type="evidence" value="ECO:0000314"/>
    <property type="project" value="CACAO"/>
</dbReference>
<dbReference type="Gene3D" id="3.40.630.100">
    <property type="entry name" value="Poly-gamma-glutamate hydrolase, zinc-binding motif"/>
    <property type="match status" value="1"/>
</dbReference>
<dbReference type="InterPro" id="IPR008585">
    <property type="entry name" value="Gamma_PGA_hydro"/>
</dbReference>
<dbReference type="InterPro" id="IPR038128">
    <property type="entry name" value="Gamma_PGA_hydro_sf"/>
</dbReference>
<dbReference type="Pfam" id="PF05908">
    <property type="entry name" value="Gamma_PGA_hydro"/>
    <property type="match status" value="1"/>
</dbReference>
<accession>O31815</accession>
<comment type="subcellular location">
    <subcellularLocation>
        <location evidence="3">Cell membrane</location>
        <topology evidence="3">Single-pass membrane protein</topology>
    </subcellularLocation>
</comment>
<comment type="developmental stage">
    <text evidence="2">Expressed during sporulation, and this requires the RNA polymerase sigma factor SigK.</text>
</comment>
<comment type="similarity">
    <text evidence="3">Belongs to the UPF0714 family.</text>
</comment>
<sequence>MKPAKVSLLRRLLHSLKHVDCNIAKRFPSTIKIVKLLMIFMVFTPISSIYAEDVYQNFEELKNNEDPSDYGVVTKETGSPVLVLAIHGGGIEGGTSEVARELSKEYSMYLFEGLKSAGNSVLHITSTHFDEPRALKMTGNHEYVISLHGYAEEDQQIEVGGTDRVRAADLVEKLQHAGFPAVLLNMDHPHAGVSPNNIANKSKTGLSIQIEMSTGFRKSLFGIFSLKSRAVTQNERFYEFTEVMFRFLKNSY</sequence>
<organism>
    <name type="scientific">Bacillus subtilis (strain 168)</name>
    <dbReference type="NCBI Taxonomy" id="224308"/>
    <lineage>
        <taxon>Bacteria</taxon>
        <taxon>Bacillati</taxon>
        <taxon>Bacillota</taxon>
        <taxon>Bacilli</taxon>
        <taxon>Bacillales</taxon>
        <taxon>Bacillaceae</taxon>
        <taxon>Bacillus</taxon>
    </lineage>
</organism>
<protein>
    <recommendedName>
        <fullName>UPF0714 protein YndL</fullName>
    </recommendedName>
</protein>
<keyword id="KW-0002">3D-structure</keyword>
<keyword id="KW-1003">Cell membrane</keyword>
<keyword id="KW-0472">Membrane</keyword>
<keyword id="KW-1185">Reference proteome</keyword>
<keyword id="KW-0812">Transmembrane</keyword>
<keyword id="KW-1133">Transmembrane helix</keyword>